<protein>
    <recommendedName>
        <fullName evidence="1">tRNA-specific 2-thiouridylase MnmA</fullName>
        <ecNumber evidence="1">2.8.1.13</ecNumber>
    </recommendedName>
</protein>
<keyword id="KW-0067">ATP-binding</keyword>
<keyword id="KW-0963">Cytoplasm</keyword>
<keyword id="KW-1015">Disulfide bond</keyword>
<keyword id="KW-0547">Nucleotide-binding</keyword>
<keyword id="KW-1185">Reference proteome</keyword>
<keyword id="KW-0694">RNA-binding</keyword>
<keyword id="KW-0808">Transferase</keyword>
<keyword id="KW-0819">tRNA processing</keyword>
<keyword id="KW-0820">tRNA-binding</keyword>
<evidence type="ECO:0000255" key="1">
    <source>
        <dbReference type="HAMAP-Rule" id="MF_00144"/>
    </source>
</evidence>
<organism>
    <name type="scientific">Porphyromonas gingivalis (strain ATCC BAA-308 / W83)</name>
    <dbReference type="NCBI Taxonomy" id="242619"/>
    <lineage>
        <taxon>Bacteria</taxon>
        <taxon>Pseudomonadati</taxon>
        <taxon>Bacteroidota</taxon>
        <taxon>Bacteroidia</taxon>
        <taxon>Bacteroidales</taxon>
        <taxon>Porphyromonadaceae</taxon>
        <taxon>Porphyromonas</taxon>
    </lineage>
</organism>
<reference key="1">
    <citation type="journal article" date="2003" name="J. Bacteriol.">
        <title>Complete genome sequence of the oral pathogenic bacterium Porphyromonas gingivalis strain W83.</title>
        <authorList>
            <person name="Nelson K.E."/>
            <person name="Fleischmann R.D."/>
            <person name="DeBoy R.T."/>
            <person name="Paulsen I.T."/>
            <person name="Fouts D.E."/>
            <person name="Eisen J.A."/>
            <person name="Daugherty S.C."/>
            <person name="Dodson R.J."/>
            <person name="Durkin A.S."/>
            <person name="Gwinn M.L."/>
            <person name="Haft D.H."/>
            <person name="Kolonay J.F."/>
            <person name="Nelson W.C."/>
            <person name="Mason T.M."/>
            <person name="Tallon L."/>
            <person name="Gray J."/>
            <person name="Granger D."/>
            <person name="Tettelin H."/>
            <person name="Dong H."/>
            <person name="Galvin J.L."/>
            <person name="Duncan M.J."/>
            <person name="Dewhirst F.E."/>
            <person name="Fraser C.M."/>
        </authorList>
    </citation>
    <scope>NUCLEOTIDE SEQUENCE [LARGE SCALE GENOMIC DNA]</scope>
    <source>
        <strain>ATCC BAA-308 / W83</strain>
    </source>
</reference>
<sequence>MDVAALVSGGVDSSVVVHRLCEEGYKPAIFYIRIGMEDKDGYIDCPAEEDIELTTLIARRYGCPFEVVDLHKEYWERVVSYTVETVRRGLTPNPDMMCNKLIKFGCFEERWGYQFDRIATGHYATTDLLNGKTYLSTAKDPVKDQTDFLAQINFAQISKLMFPIGHLLKSEVRAIANAAGLPSAKRKDSQGICFLGKIDYNDFIERYLGKKEGRIIELETGKVIGRHQGYWFHTIGQRKGLGLSGGPWFVVKKDIKRNIILVSRGYDPDAQYGKTIEMETFDFITEDAYEAGYWNREDATPVTFKIRHTPEFTRGLLYKGEKGYRLESEERIQGIAPGQYCVIYDEDHHLCYGSGMITKGR</sequence>
<name>MNMA_PORGI</name>
<comment type="function">
    <text evidence="1">Catalyzes the 2-thiolation of uridine at the wobble position (U34) of tRNA, leading to the formation of s(2)U34.</text>
</comment>
<comment type="catalytic activity">
    <reaction evidence="1">
        <text>S-sulfanyl-L-cysteinyl-[protein] + uridine(34) in tRNA + AH2 + ATP = 2-thiouridine(34) in tRNA + L-cysteinyl-[protein] + A + AMP + diphosphate + H(+)</text>
        <dbReference type="Rhea" id="RHEA:47032"/>
        <dbReference type="Rhea" id="RHEA-COMP:10131"/>
        <dbReference type="Rhea" id="RHEA-COMP:11726"/>
        <dbReference type="Rhea" id="RHEA-COMP:11727"/>
        <dbReference type="Rhea" id="RHEA-COMP:11728"/>
        <dbReference type="ChEBI" id="CHEBI:13193"/>
        <dbReference type="ChEBI" id="CHEBI:15378"/>
        <dbReference type="ChEBI" id="CHEBI:17499"/>
        <dbReference type="ChEBI" id="CHEBI:29950"/>
        <dbReference type="ChEBI" id="CHEBI:30616"/>
        <dbReference type="ChEBI" id="CHEBI:33019"/>
        <dbReference type="ChEBI" id="CHEBI:61963"/>
        <dbReference type="ChEBI" id="CHEBI:65315"/>
        <dbReference type="ChEBI" id="CHEBI:87170"/>
        <dbReference type="ChEBI" id="CHEBI:456215"/>
        <dbReference type="EC" id="2.8.1.13"/>
    </reaction>
</comment>
<comment type="subcellular location">
    <subcellularLocation>
        <location evidence="1">Cytoplasm</location>
    </subcellularLocation>
</comment>
<comment type="similarity">
    <text evidence="1">Belongs to the MnmA/TRMU family.</text>
</comment>
<gene>
    <name evidence="1" type="primary">mnmA</name>
    <name type="ordered locus">PG_0268</name>
</gene>
<feature type="chain" id="PRO_0000349741" description="tRNA-specific 2-thiouridylase MnmA">
    <location>
        <begin position="1"/>
        <end position="361"/>
    </location>
</feature>
<feature type="region of interest" description="Interaction with target base in tRNA" evidence="1">
    <location>
        <begin position="93"/>
        <end position="95"/>
    </location>
</feature>
<feature type="region of interest" description="Interaction with tRNA" evidence="1">
    <location>
        <begin position="143"/>
        <end position="145"/>
    </location>
</feature>
<feature type="active site" description="Nucleophile" evidence="1">
    <location>
        <position position="98"/>
    </location>
</feature>
<feature type="active site" description="Cysteine persulfide intermediate" evidence="1">
    <location>
        <position position="193"/>
    </location>
</feature>
<feature type="binding site" evidence="1">
    <location>
        <begin position="6"/>
        <end position="13"/>
    </location>
    <ligand>
        <name>ATP</name>
        <dbReference type="ChEBI" id="CHEBI:30616"/>
    </ligand>
</feature>
<feature type="binding site" evidence="1">
    <location>
        <position position="32"/>
    </location>
    <ligand>
        <name>ATP</name>
        <dbReference type="ChEBI" id="CHEBI:30616"/>
    </ligand>
</feature>
<feature type="binding site" evidence="1">
    <location>
        <position position="121"/>
    </location>
    <ligand>
        <name>ATP</name>
        <dbReference type="ChEBI" id="CHEBI:30616"/>
    </ligand>
</feature>
<feature type="site" description="Interaction with tRNA" evidence="1">
    <location>
        <position position="122"/>
    </location>
</feature>
<feature type="site" description="Interaction with tRNA" evidence="1">
    <location>
        <position position="339"/>
    </location>
</feature>
<feature type="disulfide bond" description="Alternate" evidence="1">
    <location>
        <begin position="98"/>
        <end position="193"/>
    </location>
</feature>
<dbReference type="EC" id="2.8.1.13" evidence="1"/>
<dbReference type="EMBL" id="AE015924">
    <property type="protein sequence ID" value="AAQ65488.1"/>
    <property type="molecule type" value="Genomic_DNA"/>
</dbReference>
<dbReference type="RefSeq" id="WP_005874480.1">
    <property type="nucleotide sequence ID" value="NC_002950.2"/>
</dbReference>
<dbReference type="SMR" id="Q7MAW9"/>
<dbReference type="STRING" id="242619.PG_0268"/>
<dbReference type="EnsemblBacteria" id="AAQ65488">
    <property type="protein sequence ID" value="AAQ65488"/>
    <property type="gene ID" value="PG_0268"/>
</dbReference>
<dbReference type="KEGG" id="pgi:PG_0268"/>
<dbReference type="PATRIC" id="fig|242619.8.peg.246"/>
<dbReference type="eggNOG" id="COG0482">
    <property type="taxonomic scope" value="Bacteria"/>
</dbReference>
<dbReference type="HOGENOM" id="CLU_035188_1_0_10"/>
<dbReference type="BioCyc" id="PGIN242619:G1G02-251-MONOMER"/>
<dbReference type="Proteomes" id="UP000000588">
    <property type="component" value="Chromosome"/>
</dbReference>
<dbReference type="GO" id="GO:0005737">
    <property type="term" value="C:cytoplasm"/>
    <property type="evidence" value="ECO:0007669"/>
    <property type="project" value="UniProtKB-SubCell"/>
</dbReference>
<dbReference type="GO" id="GO:0005524">
    <property type="term" value="F:ATP binding"/>
    <property type="evidence" value="ECO:0007669"/>
    <property type="project" value="UniProtKB-KW"/>
</dbReference>
<dbReference type="GO" id="GO:0000049">
    <property type="term" value="F:tRNA binding"/>
    <property type="evidence" value="ECO:0007669"/>
    <property type="project" value="UniProtKB-KW"/>
</dbReference>
<dbReference type="GO" id="GO:0103016">
    <property type="term" value="F:tRNA-uridine 2-sulfurtransferase activity"/>
    <property type="evidence" value="ECO:0007669"/>
    <property type="project" value="UniProtKB-EC"/>
</dbReference>
<dbReference type="GO" id="GO:0006400">
    <property type="term" value="P:tRNA modification"/>
    <property type="evidence" value="ECO:0007669"/>
    <property type="project" value="UniProtKB-UniRule"/>
</dbReference>
<dbReference type="CDD" id="cd01998">
    <property type="entry name" value="MnmA_TRMU-like"/>
    <property type="match status" value="1"/>
</dbReference>
<dbReference type="FunFam" id="2.30.30.280:FF:000001">
    <property type="entry name" value="tRNA-specific 2-thiouridylase MnmA"/>
    <property type="match status" value="1"/>
</dbReference>
<dbReference type="Gene3D" id="2.30.30.280">
    <property type="entry name" value="Adenine nucleotide alpha hydrolases-like domains"/>
    <property type="match status" value="1"/>
</dbReference>
<dbReference type="Gene3D" id="3.40.50.620">
    <property type="entry name" value="HUPs"/>
    <property type="match status" value="1"/>
</dbReference>
<dbReference type="Gene3D" id="2.40.30.10">
    <property type="entry name" value="Translation factors"/>
    <property type="match status" value="1"/>
</dbReference>
<dbReference type="HAMAP" id="MF_00144">
    <property type="entry name" value="tRNA_thiouridyl_MnmA"/>
    <property type="match status" value="1"/>
</dbReference>
<dbReference type="InterPro" id="IPR004506">
    <property type="entry name" value="MnmA-like"/>
</dbReference>
<dbReference type="InterPro" id="IPR046885">
    <property type="entry name" value="MnmA-like_C"/>
</dbReference>
<dbReference type="InterPro" id="IPR046884">
    <property type="entry name" value="MnmA-like_central"/>
</dbReference>
<dbReference type="InterPro" id="IPR023382">
    <property type="entry name" value="MnmA-like_central_sf"/>
</dbReference>
<dbReference type="InterPro" id="IPR014729">
    <property type="entry name" value="Rossmann-like_a/b/a_fold"/>
</dbReference>
<dbReference type="InterPro" id="IPR051305">
    <property type="entry name" value="tRNA_2-thiouridylase_MnmA"/>
</dbReference>
<dbReference type="NCBIfam" id="NF001138">
    <property type="entry name" value="PRK00143.1"/>
    <property type="match status" value="1"/>
</dbReference>
<dbReference type="NCBIfam" id="TIGR00420">
    <property type="entry name" value="trmU"/>
    <property type="match status" value="1"/>
</dbReference>
<dbReference type="PANTHER" id="PTHR43052">
    <property type="match status" value="1"/>
</dbReference>
<dbReference type="PANTHER" id="PTHR43052:SF1">
    <property type="entry name" value="TRNA-5-TAURINOMETHYLURIDINE 2-SULFURTRANSFERASE"/>
    <property type="match status" value="1"/>
</dbReference>
<dbReference type="Pfam" id="PF03054">
    <property type="entry name" value="tRNA_Me_trans"/>
    <property type="match status" value="1"/>
</dbReference>
<dbReference type="Pfam" id="PF20258">
    <property type="entry name" value="tRNA_Me_trans_C"/>
    <property type="match status" value="1"/>
</dbReference>
<dbReference type="Pfam" id="PF20259">
    <property type="entry name" value="tRNA_Me_trans_M"/>
    <property type="match status" value="1"/>
</dbReference>
<dbReference type="SUPFAM" id="SSF52402">
    <property type="entry name" value="Adenine nucleotide alpha hydrolases-like"/>
    <property type="match status" value="1"/>
</dbReference>
<proteinExistence type="inferred from homology"/>
<accession>Q7MAW9</accession>